<organism>
    <name type="scientific">Leptothrix cholodnii (strain ATCC 51168 / LMG 8142 / SP-6)</name>
    <name type="common">Leptothrix discophora (strain SP-6)</name>
    <dbReference type="NCBI Taxonomy" id="395495"/>
    <lineage>
        <taxon>Bacteria</taxon>
        <taxon>Pseudomonadati</taxon>
        <taxon>Pseudomonadota</taxon>
        <taxon>Betaproteobacteria</taxon>
        <taxon>Burkholderiales</taxon>
        <taxon>Sphaerotilaceae</taxon>
        <taxon>Leptothrix</taxon>
    </lineage>
</organism>
<comment type="function">
    <text evidence="1">Major role in the synthesis of nucleoside triphosphates other than ATP. The ATP gamma phosphate is transferred to the NDP beta phosphate via a ping-pong mechanism, using a phosphorylated active-site intermediate.</text>
</comment>
<comment type="catalytic activity">
    <reaction evidence="1">
        <text>a 2'-deoxyribonucleoside 5'-diphosphate + ATP = a 2'-deoxyribonucleoside 5'-triphosphate + ADP</text>
        <dbReference type="Rhea" id="RHEA:44640"/>
        <dbReference type="ChEBI" id="CHEBI:30616"/>
        <dbReference type="ChEBI" id="CHEBI:61560"/>
        <dbReference type="ChEBI" id="CHEBI:73316"/>
        <dbReference type="ChEBI" id="CHEBI:456216"/>
        <dbReference type="EC" id="2.7.4.6"/>
    </reaction>
</comment>
<comment type="catalytic activity">
    <reaction evidence="1">
        <text>a ribonucleoside 5'-diphosphate + ATP = a ribonucleoside 5'-triphosphate + ADP</text>
        <dbReference type="Rhea" id="RHEA:18113"/>
        <dbReference type="ChEBI" id="CHEBI:30616"/>
        <dbReference type="ChEBI" id="CHEBI:57930"/>
        <dbReference type="ChEBI" id="CHEBI:61557"/>
        <dbReference type="ChEBI" id="CHEBI:456216"/>
        <dbReference type="EC" id="2.7.4.6"/>
    </reaction>
</comment>
<comment type="cofactor">
    <cofactor evidence="1">
        <name>Mg(2+)</name>
        <dbReference type="ChEBI" id="CHEBI:18420"/>
    </cofactor>
</comment>
<comment type="subunit">
    <text evidence="1">Homotetramer.</text>
</comment>
<comment type="subcellular location">
    <subcellularLocation>
        <location evidence="1">Cytoplasm</location>
    </subcellularLocation>
</comment>
<comment type="similarity">
    <text evidence="1">Belongs to the NDK family.</text>
</comment>
<keyword id="KW-0067">ATP-binding</keyword>
<keyword id="KW-0963">Cytoplasm</keyword>
<keyword id="KW-0418">Kinase</keyword>
<keyword id="KW-0460">Magnesium</keyword>
<keyword id="KW-0479">Metal-binding</keyword>
<keyword id="KW-0546">Nucleotide metabolism</keyword>
<keyword id="KW-0547">Nucleotide-binding</keyword>
<keyword id="KW-0597">Phosphoprotein</keyword>
<keyword id="KW-1185">Reference proteome</keyword>
<keyword id="KW-0808">Transferase</keyword>
<gene>
    <name evidence="1" type="primary">ndk</name>
    <name type="ordered locus">Lcho_2872</name>
</gene>
<evidence type="ECO:0000255" key="1">
    <source>
        <dbReference type="HAMAP-Rule" id="MF_00451"/>
    </source>
</evidence>
<dbReference type="EC" id="2.7.4.6" evidence="1"/>
<dbReference type="EMBL" id="CP001013">
    <property type="protein sequence ID" value="ACB35137.1"/>
    <property type="molecule type" value="Genomic_DNA"/>
</dbReference>
<dbReference type="RefSeq" id="WP_012347891.1">
    <property type="nucleotide sequence ID" value="NC_010524.1"/>
</dbReference>
<dbReference type="SMR" id="B1XXL7"/>
<dbReference type="STRING" id="395495.Lcho_2872"/>
<dbReference type="KEGG" id="lch:Lcho_2872"/>
<dbReference type="eggNOG" id="COG0105">
    <property type="taxonomic scope" value="Bacteria"/>
</dbReference>
<dbReference type="HOGENOM" id="CLU_060216_8_1_4"/>
<dbReference type="OrthoDB" id="9801161at2"/>
<dbReference type="Proteomes" id="UP000001693">
    <property type="component" value="Chromosome"/>
</dbReference>
<dbReference type="GO" id="GO:0005737">
    <property type="term" value="C:cytoplasm"/>
    <property type="evidence" value="ECO:0007669"/>
    <property type="project" value="UniProtKB-SubCell"/>
</dbReference>
<dbReference type="GO" id="GO:0005524">
    <property type="term" value="F:ATP binding"/>
    <property type="evidence" value="ECO:0007669"/>
    <property type="project" value="UniProtKB-UniRule"/>
</dbReference>
<dbReference type="GO" id="GO:0046872">
    <property type="term" value="F:metal ion binding"/>
    <property type="evidence" value="ECO:0007669"/>
    <property type="project" value="UniProtKB-KW"/>
</dbReference>
<dbReference type="GO" id="GO:0004550">
    <property type="term" value="F:nucleoside diphosphate kinase activity"/>
    <property type="evidence" value="ECO:0007669"/>
    <property type="project" value="UniProtKB-UniRule"/>
</dbReference>
<dbReference type="GO" id="GO:0006241">
    <property type="term" value="P:CTP biosynthetic process"/>
    <property type="evidence" value="ECO:0007669"/>
    <property type="project" value="UniProtKB-UniRule"/>
</dbReference>
<dbReference type="GO" id="GO:0006183">
    <property type="term" value="P:GTP biosynthetic process"/>
    <property type="evidence" value="ECO:0007669"/>
    <property type="project" value="UniProtKB-UniRule"/>
</dbReference>
<dbReference type="GO" id="GO:0006228">
    <property type="term" value="P:UTP biosynthetic process"/>
    <property type="evidence" value="ECO:0007669"/>
    <property type="project" value="UniProtKB-UniRule"/>
</dbReference>
<dbReference type="CDD" id="cd04413">
    <property type="entry name" value="NDPk_I"/>
    <property type="match status" value="1"/>
</dbReference>
<dbReference type="FunFam" id="3.30.70.141:FF:000001">
    <property type="entry name" value="Nucleoside diphosphate kinase"/>
    <property type="match status" value="1"/>
</dbReference>
<dbReference type="Gene3D" id="3.30.70.141">
    <property type="entry name" value="Nucleoside diphosphate kinase-like domain"/>
    <property type="match status" value="1"/>
</dbReference>
<dbReference type="HAMAP" id="MF_00451">
    <property type="entry name" value="NDP_kinase"/>
    <property type="match status" value="1"/>
</dbReference>
<dbReference type="InterPro" id="IPR034907">
    <property type="entry name" value="NDK-like_dom"/>
</dbReference>
<dbReference type="InterPro" id="IPR036850">
    <property type="entry name" value="NDK-like_dom_sf"/>
</dbReference>
<dbReference type="InterPro" id="IPR001564">
    <property type="entry name" value="Nucleoside_diP_kinase"/>
</dbReference>
<dbReference type="InterPro" id="IPR023005">
    <property type="entry name" value="Nucleoside_diP_kinase_AS"/>
</dbReference>
<dbReference type="NCBIfam" id="NF001908">
    <property type="entry name" value="PRK00668.1"/>
    <property type="match status" value="1"/>
</dbReference>
<dbReference type="PANTHER" id="PTHR46161">
    <property type="entry name" value="NUCLEOSIDE DIPHOSPHATE KINASE"/>
    <property type="match status" value="1"/>
</dbReference>
<dbReference type="PANTHER" id="PTHR46161:SF3">
    <property type="entry name" value="NUCLEOSIDE DIPHOSPHATE KINASE DDB_G0292928-RELATED"/>
    <property type="match status" value="1"/>
</dbReference>
<dbReference type="Pfam" id="PF00334">
    <property type="entry name" value="NDK"/>
    <property type="match status" value="1"/>
</dbReference>
<dbReference type="PRINTS" id="PR01243">
    <property type="entry name" value="NUCDPKINASE"/>
</dbReference>
<dbReference type="SMART" id="SM00562">
    <property type="entry name" value="NDK"/>
    <property type="match status" value="1"/>
</dbReference>
<dbReference type="SUPFAM" id="SSF54919">
    <property type="entry name" value="Nucleoside diphosphate kinase, NDK"/>
    <property type="match status" value="1"/>
</dbReference>
<dbReference type="PROSITE" id="PS00469">
    <property type="entry name" value="NDPK"/>
    <property type="match status" value="1"/>
</dbReference>
<dbReference type="PROSITE" id="PS51374">
    <property type="entry name" value="NDPK_LIKE"/>
    <property type="match status" value="1"/>
</dbReference>
<accession>B1XXL7</accession>
<proteinExistence type="inferred from homology"/>
<name>NDK_LEPCP</name>
<sequence length="141" mass="15166">MAIERTLSIIKPDAVAKNVIGQILARFEGAGLKIAAARLAQLSRAEAEQFYAVHKARPFFNDLVNFMISGPVMIQVLEGEGAILKNRDLMGATDPKKAEKGTIRADFADSIDANAVHGSDAPETAAVEIAFFFPGMAVYSR</sequence>
<protein>
    <recommendedName>
        <fullName evidence="1">Nucleoside diphosphate kinase</fullName>
        <shortName evidence="1">NDK</shortName>
        <shortName evidence="1">NDP kinase</shortName>
        <ecNumber evidence="1">2.7.4.6</ecNumber>
    </recommendedName>
    <alternativeName>
        <fullName evidence="1">Nucleoside-2-P kinase</fullName>
    </alternativeName>
</protein>
<feature type="chain" id="PRO_1000192268" description="Nucleoside diphosphate kinase">
    <location>
        <begin position="1"/>
        <end position="141"/>
    </location>
</feature>
<feature type="active site" description="Pros-phosphohistidine intermediate" evidence="1">
    <location>
        <position position="117"/>
    </location>
</feature>
<feature type="binding site" evidence="1">
    <location>
        <position position="11"/>
    </location>
    <ligand>
        <name>ATP</name>
        <dbReference type="ChEBI" id="CHEBI:30616"/>
    </ligand>
</feature>
<feature type="binding site" evidence="1">
    <location>
        <position position="59"/>
    </location>
    <ligand>
        <name>ATP</name>
        <dbReference type="ChEBI" id="CHEBI:30616"/>
    </ligand>
</feature>
<feature type="binding site" evidence="1">
    <location>
        <position position="87"/>
    </location>
    <ligand>
        <name>ATP</name>
        <dbReference type="ChEBI" id="CHEBI:30616"/>
    </ligand>
</feature>
<feature type="binding site" evidence="1">
    <location>
        <position position="93"/>
    </location>
    <ligand>
        <name>ATP</name>
        <dbReference type="ChEBI" id="CHEBI:30616"/>
    </ligand>
</feature>
<feature type="binding site" evidence="1">
    <location>
        <position position="104"/>
    </location>
    <ligand>
        <name>ATP</name>
        <dbReference type="ChEBI" id="CHEBI:30616"/>
    </ligand>
</feature>
<feature type="binding site" evidence="1">
    <location>
        <position position="114"/>
    </location>
    <ligand>
        <name>ATP</name>
        <dbReference type="ChEBI" id="CHEBI:30616"/>
    </ligand>
</feature>
<reference key="1">
    <citation type="submission" date="2008-03" db="EMBL/GenBank/DDBJ databases">
        <title>Complete sequence of Leptothrix cholodnii SP-6.</title>
        <authorList>
            <consortium name="US DOE Joint Genome Institute"/>
            <person name="Copeland A."/>
            <person name="Lucas S."/>
            <person name="Lapidus A."/>
            <person name="Glavina del Rio T."/>
            <person name="Dalin E."/>
            <person name="Tice H."/>
            <person name="Bruce D."/>
            <person name="Goodwin L."/>
            <person name="Pitluck S."/>
            <person name="Chertkov O."/>
            <person name="Brettin T."/>
            <person name="Detter J.C."/>
            <person name="Han C."/>
            <person name="Kuske C.R."/>
            <person name="Schmutz J."/>
            <person name="Larimer F."/>
            <person name="Land M."/>
            <person name="Hauser L."/>
            <person name="Kyrpides N."/>
            <person name="Lykidis A."/>
            <person name="Emerson D."/>
            <person name="Richardson P."/>
        </authorList>
    </citation>
    <scope>NUCLEOTIDE SEQUENCE [LARGE SCALE GENOMIC DNA]</scope>
    <source>
        <strain>ATCC 51168 / LMG 8142 / SP-6</strain>
    </source>
</reference>